<reference key="1">
    <citation type="submission" date="2006-05" db="EMBL/GenBank/DDBJ databases">
        <title>Complete sequence of chromosome 3 of Burkholderia cenocepacia AU 1054.</title>
        <authorList>
            <consortium name="US DOE Joint Genome Institute"/>
            <person name="Copeland A."/>
            <person name="Lucas S."/>
            <person name="Lapidus A."/>
            <person name="Barry K."/>
            <person name="Detter J.C."/>
            <person name="Glavina del Rio T."/>
            <person name="Hammon N."/>
            <person name="Israni S."/>
            <person name="Dalin E."/>
            <person name="Tice H."/>
            <person name="Pitluck S."/>
            <person name="Chain P."/>
            <person name="Malfatti S."/>
            <person name="Shin M."/>
            <person name="Vergez L."/>
            <person name="Schmutz J."/>
            <person name="Larimer F."/>
            <person name="Land M."/>
            <person name="Hauser L."/>
            <person name="Kyrpides N."/>
            <person name="Lykidis A."/>
            <person name="LiPuma J.J."/>
            <person name="Konstantinidis K."/>
            <person name="Tiedje J.M."/>
            <person name="Richardson P."/>
        </authorList>
    </citation>
    <scope>NUCLEOTIDE SEQUENCE [LARGE SCALE GENOMIC DNA]</scope>
    <source>
        <strain>AU 1054</strain>
    </source>
</reference>
<accession>Q1BHA4</accession>
<organism>
    <name type="scientific">Burkholderia orbicola (strain AU 1054)</name>
    <dbReference type="NCBI Taxonomy" id="331271"/>
    <lineage>
        <taxon>Bacteria</taxon>
        <taxon>Pseudomonadati</taxon>
        <taxon>Pseudomonadota</taxon>
        <taxon>Betaproteobacteria</taxon>
        <taxon>Burkholderiales</taxon>
        <taxon>Burkholderiaceae</taxon>
        <taxon>Burkholderia</taxon>
        <taxon>Burkholderia cepacia complex</taxon>
        <taxon>Burkholderia orbicola</taxon>
    </lineage>
</organism>
<name>ISPF_BURO1</name>
<evidence type="ECO:0000255" key="1">
    <source>
        <dbReference type="HAMAP-Rule" id="MF_00107"/>
    </source>
</evidence>
<proteinExistence type="inferred from homology"/>
<dbReference type="EC" id="4.6.1.12" evidence="1"/>
<dbReference type="EMBL" id="CP000380">
    <property type="protein sequence ID" value="ABF81001.1"/>
    <property type="molecule type" value="Genomic_DNA"/>
</dbReference>
<dbReference type="SMR" id="Q1BHA4"/>
<dbReference type="HOGENOM" id="CLU_084630_2_0_4"/>
<dbReference type="UniPathway" id="UPA00056">
    <property type="reaction ID" value="UER00095"/>
</dbReference>
<dbReference type="GO" id="GO:0008685">
    <property type="term" value="F:2-C-methyl-D-erythritol 2,4-cyclodiphosphate synthase activity"/>
    <property type="evidence" value="ECO:0007669"/>
    <property type="project" value="UniProtKB-UniRule"/>
</dbReference>
<dbReference type="GO" id="GO:0046872">
    <property type="term" value="F:metal ion binding"/>
    <property type="evidence" value="ECO:0007669"/>
    <property type="project" value="UniProtKB-KW"/>
</dbReference>
<dbReference type="GO" id="GO:0019288">
    <property type="term" value="P:isopentenyl diphosphate biosynthetic process, methylerythritol 4-phosphate pathway"/>
    <property type="evidence" value="ECO:0007669"/>
    <property type="project" value="UniProtKB-UniRule"/>
</dbReference>
<dbReference type="GO" id="GO:0016114">
    <property type="term" value="P:terpenoid biosynthetic process"/>
    <property type="evidence" value="ECO:0007669"/>
    <property type="project" value="InterPro"/>
</dbReference>
<dbReference type="CDD" id="cd00554">
    <property type="entry name" value="MECDP_synthase"/>
    <property type="match status" value="1"/>
</dbReference>
<dbReference type="FunFam" id="3.30.1330.50:FF:000001">
    <property type="entry name" value="2-C-methyl-D-erythritol 2,4-cyclodiphosphate synthase"/>
    <property type="match status" value="1"/>
</dbReference>
<dbReference type="Gene3D" id="3.30.1330.50">
    <property type="entry name" value="2-C-methyl-D-erythritol 2,4-cyclodiphosphate synthase"/>
    <property type="match status" value="1"/>
</dbReference>
<dbReference type="HAMAP" id="MF_00107">
    <property type="entry name" value="IspF"/>
    <property type="match status" value="1"/>
</dbReference>
<dbReference type="InterPro" id="IPR003526">
    <property type="entry name" value="MECDP_synthase"/>
</dbReference>
<dbReference type="InterPro" id="IPR020555">
    <property type="entry name" value="MECDP_synthase_CS"/>
</dbReference>
<dbReference type="InterPro" id="IPR036571">
    <property type="entry name" value="MECDP_synthase_sf"/>
</dbReference>
<dbReference type="NCBIfam" id="TIGR00151">
    <property type="entry name" value="ispF"/>
    <property type="match status" value="1"/>
</dbReference>
<dbReference type="PANTHER" id="PTHR43181">
    <property type="entry name" value="2-C-METHYL-D-ERYTHRITOL 2,4-CYCLODIPHOSPHATE SYNTHASE, CHLOROPLASTIC"/>
    <property type="match status" value="1"/>
</dbReference>
<dbReference type="PANTHER" id="PTHR43181:SF1">
    <property type="entry name" value="2-C-METHYL-D-ERYTHRITOL 2,4-CYCLODIPHOSPHATE SYNTHASE, CHLOROPLASTIC"/>
    <property type="match status" value="1"/>
</dbReference>
<dbReference type="Pfam" id="PF02542">
    <property type="entry name" value="YgbB"/>
    <property type="match status" value="1"/>
</dbReference>
<dbReference type="SUPFAM" id="SSF69765">
    <property type="entry name" value="IpsF-like"/>
    <property type="match status" value="1"/>
</dbReference>
<dbReference type="PROSITE" id="PS01350">
    <property type="entry name" value="ISPF"/>
    <property type="match status" value="1"/>
</dbReference>
<protein>
    <recommendedName>
        <fullName evidence="1">2-C-methyl-D-erythritol 2,4-cyclodiphosphate synthase</fullName>
        <shortName evidence="1">MECDP-synthase</shortName>
        <shortName evidence="1">MECPP-synthase</shortName>
        <shortName evidence="1">MECPS</shortName>
        <ecNumber evidence="1">4.6.1.12</ecNumber>
    </recommendedName>
</protein>
<gene>
    <name evidence="1" type="primary">ispF</name>
    <name type="ordered locus">Bcen_6137</name>
</gene>
<feature type="chain" id="PRO_1000022809" description="2-C-methyl-D-erythritol 2,4-cyclodiphosphate synthase">
    <location>
        <begin position="1"/>
        <end position="161"/>
    </location>
</feature>
<feature type="binding site" evidence="1">
    <location>
        <begin position="10"/>
        <end position="12"/>
    </location>
    <ligand>
        <name>4-CDP-2-C-methyl-D-erythritol 2-phosphate</name>
        <dbReference type="ChEBI" id="CHEBI:57919"/>
    </ligand>
</feature>
<feature type="binding site" evidence="1">
    <location>
        <position position="10"/>
    </location>
    <ligand>
        <name>a divalent metal cation</name>
        <dbReference type="ChEBI" id="CHEBI:60240"/>
    </ligand>
</feature>
<feature type="binding site" evidence="1">
    <location>
        <position position="12"/>
    </location>
    <ligand>
        <name>a divalent metal cation</name>
        <dbReference type="ChEBI" id="CHEBI:60240"/>
    </ligand>
</feature>
<feature type="binding site" evidence="1">
    <location>
        <begin position="36"/>
        <end position="37"/>
    </location>
    <ligand>
        <name>4-CDP-2-C-methyl-D-erythritol 2-phosphate</name>
        <dbReference type="ChEBI" id="CHEBI:57919"/>
    </ligand>
</feature>
<feature type="binding site" evidence="1">
    <location>
        <position position="44"/>
    </location>
    <ligand>
        <name>a divalent metal cation</name>
        <dbReference type="ChEBI" id="CHEBI:60240"/>
    </ligand>
</feature>
<feature type="binding site" evidence="1">
    <location>
        <begin position="58"/>
        <end position="60"/>
    </location>
    <ligand>
        <name>4-CDP-2-C-methyl-D-erythritol 2-phosphate</name>
        <dbReference type="ChEBI" id="CHEBI:57919"/>
    </ligand>
</feature>
<feature type="binding site" evidence="1">
    <location>
        <begin position="63"/>
        <end position="67"/>
    </location>
    <ligand>
        <name>4-CDP-2-C-methyl-D-erythritol 2-phosphate</name>
        <dbReference type="ChEBI" id="CHEBI:57919"/>
    </ligand>
</feature>
<feature type="binding site" evidence="1">
    <location>
        <position position="144"/>
    </location>
    <ligand>
        <name>4-CDP-2-C-methyl-D-erythritol 2-phosphate</name>
        <dbReference type="ChEBI" id="CHEBI:57919"/>
    </ligand>
</feature>
<feature type="site" description="Transition state stabilizer" evidence="1">
    <location>
        <position position="36"/>
    </location>
</feature>
<feature type="site" description="Transition state stabilizer" evidence="1">
    <location>
        <position position="135"/>
    </location>
</feature>
<sequence>MDFRIGQGYDVHQLVEGRPLIIGGVTIPYERGLLGHSDADVLLHAITDALFGAAALGDIGRHFSDTDAAFKGADSRVLLRACAERVKAAGFTIQNVDSTVIAQAPKLAPHIDGMRANIAADLGLPLERVNVKAKTNEKLGYLGRGEGIEAQAAALLVKQGG</sequence>
<comment type="function">
    <text evidence="1">Involved in the biosynthesis of isopentenyl diphosphate (IPP) and dimethylallyl diphosphate (DMAPP), two major building blocks of isoprenoid compounds. Catalyzes the conversion of 4-diphosphocytidyl-2-C-methyl-D-erythritol 2-phosphate (CDP-ME2P) to 2-C-methyl-D-erythritol 2,4-cyclodiphosphate (ME-CPP) with a corresponding release of cytidine 5-monophosphate (CMP).</text>
</comment>
<comment type="catalytic activity">
    <reaction evidence="1">
        <text>4-CDP-2-C-methyl-D-erythritol 2-phosphate = 2-C-methyl-D-erythritol 2,4-cyclic diphosphate + CMP</text>
        <dbReference type="Rhea" id="RHEA:23864"/>
        <dbReference type="ChEBI" id="CHEBI:57919"/>
        <dbReference type="ChEBI" id="CHEBI:58483"/>
        <dbReference type="ChEBI" id="CHEBI:60377"/>
        <dbReference type="EC" id="4.6.1.12"/>
    </reaction>
</comment>
<comment type="cofactor">
    <cofactor evidence="1">
        <name>a divalent metal cation</name>
        <dbReference type="ChEBI" id="CHEBI:60240"/>
    </cofactor>
    <text evidence="1">Binds 1 divalent metal cation per subunit.</text>
</comment>
<comment type="pathway">
    <text evidence="1">Isoprenoid biosynthesis; isopentenyl diphosphate biosynthesis via DXP pathway; isopentenyl diphosphate from 1-deoxy-D-xylulose 5-phosphate: step 4/6.</text>
</comment>
<comment type="subunit">
    <text evidence="1">Homotrimer.</text>
</comment>
<comment type="similarity">
    <text evidence="1">Belongs to the IspF family.</text>
</comment>
<keyword id="KW-0414">Isoprene biosynthesis</keyword>
<keyword id="KW-0456">Lyase</keyword>
<keyword id="KW-0479">Metal-binding</keyword>